<proteinExistence type="evidence at transcript level"/>
<organism>
    <name type="scientific">Cyanidium caldarium</name>
    <name type="common">Red alga</name>
    <dbReference type="NCBI Taxonomy" id="2771"/>
    <lineage>
        <taxon>Eukaryota</taxon>
        <taxon>Rhodophyta</taxon>
        <taxon>Bangiophyceae</taxon>
        <taxon>Cyanidiales</taxon>
        <taxon>Cyanidiaceae</taxon>
        <taxon>Cyanidium</taxon>
    </lineage>
</organism>
<gene>
    <name evidence="1" type="primary">secY</name>
</gene>
<feature type="chain" id="PRO_0000131773" description="Protein translocase subunit SecY">
    <location>
        <begin position="1"/>
        <end position="410"/>
    </location>
</feature>
<feature type="transmembrane region" description="Helical" evidence="1">
    <location>
        <begin position="61"/>
        <end position="81"/>
    </location>
</feature>
<feature type="transmembrane region" description="Helical" evidence="1">
    <location>
        <begin position="106"/>
        <end position="126"/>
    </location>
</feature>
<feature type="transmembrane region" description="Helical" evidence="1">
    <location>
        <begin position="135"/>
        <end position="155"/>
    </location>
</feature>
<feature type="transmembrane region" description="Helical" evidence="1">
    <location>
        <begin position="170"/>
        <end position="190"/>
    </location>
</feature>
<feature type="transmembrane region" description="Helical" evidence="1">
    <location>
        <begin position="195"/>
        <end position="215"/>
    </location>
</feature>
<feature type="transmembrane region" description="Helical" evidence="1">
    <location>
        <begin position="248"/>
        <end position="268"/>
    </location>
</feature>
<feature type="transmembrane region" description="Helical" evidence="1">
    <location>
        <begin position="289"/>
        <end position="309"/>
    </location>
</feature>
<feature type="transmembrane region" description="Helical" evidence="1">
    <location>
        <begin position="349"/>
        <end position="369"/>
    </location>
</feature>
<feature type="transmembrane region" description="Helical" evidence="1">
    <location>
        <begin position="373"/>
        <end position="393"/>
    </location>
</feature>
<feature type="sequence conflict" description="In Ref. 1; no nucleotide entry." evidence="3" ref="1">
    <location>
        <position position="149"/>
    </location>
</feature>
<keyword id="KW-0150">Chloroplast</keyword>
<keyword id="KW-0472">Membrane</keyword>
<keyword id="KW-0934">Plastid</keyword>
<keyword id="KW-0653">Protein transport</keyword>
<keyword id="KW-0793">Thylakoid</keyword>
<keyword id="KW-0811">Translocation</keyword>
<keyword id="KW-0812">Transmembrane</keyword>
<keyword id="KW-1133">Transmembrane helix</keyword>
<keyword id="KW-0813">Transport</keyword>
<sequence length="410" mass="46243">MRPENNLRLRLFQTMKFIALERLGLFVPIPGIDQKLFSSDYSNNAISNLLNVFDNNQAPKLSVFALGIIPYINATITIQILSSAFPALKKLQSEEGEIGKKKLNKITKYLSFCFAFIESLAIVLRLQKYAFDWNLYFIVQTTLILISGAMLVMWLADNISYKGIGTGASVIIFVNIASAFAKFLLNQLFVHSIKFLDFASYFALIVFSIACIVFVQEAIRKVPIISAKQLDSTSFYSNDYFLPLRINQGGVMPIILASSLLALVDYVIRYGLSTLQAVYFINDILPFKILFLLLYSAFIIFFNYLYCSLVLNCFELSNNLKKASVVIPSIRPGKMTEKFFKDTLDNLTLFGSGFLAFIVLAPNFLEFVFHIRVFKGLAVSSLLIVVGVAIDLIKQSKTYVIAKNYENMVH</sequence>
<name>SECY_CYACA</name>
<accession>P46249</accession>
<accession>Q9MD55</accession>
<geneLocation type="chloroplast"/>
<protein>
    <recommendedName>
        <fullName evidence="1">Protein translocase subunit SecY</fullName>
    </recommendedName>
</protein>
<dbReference type="EMBL" id="AF022186">
    <property type="protein sequence ID" value="AAF12924.1"/>
    <property type="molecule type" value="Genomic_DNA"/>
</dbReference>
<dbReference type="PIR" id="S47440">
    <property type="entry name" value="S47440"/>
</dbReference>
<dbReference type="RefSeq" id="NP_045170.1">
    <property type="nucleotide sequence ID" value="NC_001840.1"/>
</dbReference>
<dbReference type="SMR" id="P46249"/>
<dbReference type="TCDB" id="3.A.5.5.1">
    <property type="family name" value="the general secretory pathway (sec) family"/>
</dbReference>
<dbReference type="GeneID" id="800285"/>
<dbReference type="GO" id="GO:0009535">
    <property type="term" value="C:chloroplast thylakoid membrane"/>
    <property type="evidence" value="ECO:0007669"/>
    <property type="project" value="UniProtKB-SubCell"/>
</dbReference>
<dbReference type="GO" id="GO:0065002">
    <property type="term" value="P:intracellular protein transmembrane transport"/>
    <property type="evidence" value="ECO:0007669"/>
    <property type="project" value="UniProtKB-UniRule"/>
</dbReference>
<dbReference type="GO" id="GO:0006605">
    <property type="term" value="P:protein targeting"/>
    <property type="evidence" value="ECO:0007669"/>
    <property type="project" value="UniProtKB-UniRule"/>
</dbReference>
<dbReference type="Gene3D" id="1.10.3370.10">
    <property type="entry name" value="SecY subunit domain"/>
    <property type="match status" value="1"/>
</dbReference>
<dbReference type="HAMAP" id="MF_01465">
    <property type="entry name" value="SecY"/>
    <property type="match status" value="1"/>
</dbReference>
<dbReference type="InterPro" id="IPR026593">
    <property type="entry name" value="SecY"/>
</dbReference>
<dbReference type="InterPro" id="IPR002208">
    <property type="entry name" value="SecY/SEC61-alpha"/>
</dbReference>
<dbReference type="InterPro" id="IPR030659">
    <property type="entry name" value="SecY_CS"/>
</dbReference>
<dbReference type="InterPro" id="IPR023201">
    <property type="entry name" value="SecY_dom_sf"/>
</dbReference>
<dbReference type="NCBIfam" id="TIGR00967">
    <property type="entry name" value="3a0501s007"/>
    <property type="match status" value="1"/>
</dbReference>
<dbReference type="PANTHER" id="PTHR10906">
    <property type="entry name" value="SECY/SEC61-ALPHA FAMILY MEMBER"/>
    <property type="match status" value="1"/>
</dbReference>
<dbReference type="Pfam" id="PF00344">
    <property type="entry name" value="SecY"/>
    <property type="match status" value="1"/>
</dbReference>
<dbReference type="PIRSF" id="PIRSF004557">
    <property type="entry name" value="SecY"/>
    <property type="match status" value="1"/>
</dbReference>
<dbReference type="PRINTS" id="PR00303">
    <property type="entry name" value="SECYTRNLCASE"/>
</dbReference>
<dbReference type="SUPFAM" id="SSF103491">
    <property type="entry name" value="Preprotein translocase SecY subunit"/>
    <property type="match status" value="1"/>
</dbReference>
<dbReference type="PROSITE" id="PS00755">
    <property type="entry name" value="SECY_1"/>
    <property type="match status" value="1"/>
</dbReference>
<dbReference type="PROSITE" id="PS00756">
    <property type="entry name" value="SECY_2"/>
    <property type="match status" value="1"/>
</dbReference>
<evidence type="ECO:0000255" key="1">
    <source>
        <dbReference type="HAMAP-Rule" id="MF_01465"/>
    </source>
</evidence>
<evidence type="ECO:0000269" key="2">
    <source>
    </source>
</evidence>
<evidence type="ECO:0000305" key="3"/>
<reference key="1">
    <citation type="journal article" date="1996" name="Plant Mol. Biol.">
        <title>A model for the evolution of the plastid sec apparatus inferred from secY gene phylogeny.</title>
        <authorList>
            <person name="Vogel H."/>
            <person name="Fischer S."/>
            <person name="Valentin K.-U."/>
        </authorList>
    </citation>
    <scope>NUCLEOTIDE SEQUENCE [GENOMIC DNA]</scope>
    <scope>INDUCTION</scope>
    <source>
        <strain>RK-1</strain>
    </source>
</reference>
<reference key="2">
    <citation type="journal article" date="2000" name="J. Mol. Evol.">
        <title>The structure and gene repertoire of an ancient red algal plastid genome.</title>
        <authorList>
            <person name="Gloeckner G."/>
            <person name="Rosenthal A."/>
            <person name="Valentin K.-U."/>
        </authorList>
    </citation>
    <scope>NUCLEOTIDE SEQUENCE [LARGE SCALE GENOMIC DNA]</scope>
    <source>
        <strain>RK-1</strain>
    </source>
</reference>
<comment type="function">
    <text evidence="1">The central subunit of the protein translocation channel SecYE. Consists of two halves formed by TMs 1-5 and 6-10. These two domains form a lateral gate at the front which open onto the bilayer between TMs 2 and 7, and are clamped together by SecE at the back. The channel is closed by both a pore ring composed of hydrophobic SecY resides and a short helix (helix 2A) on the extracellular side of the membrane which forms a plug.</text>
</comment>
<comment type="subunit">
    <text evidence="1">Component of the plastid Sec protein translocase complex, which is composed of at least SecY and SecE.</text>
</comment>
<comment type="subcellular location">
    <subcellularLocation>
        <location evidence="1">Plastid</location>
        <location evidence="1">Chloroplast thylakoid membrane</location>
        <topology evidence="1">Multi-pass membrane protein</topology>
    </subcellularLocation>
</comment>
<comment type="induction">
    <text evidence="2">A monocistronic transcript.</text>
</comment>
<comment type="similarity">
    <text evidence="1">Belongs to the SecY/SEC61-alpha family.</text>
</comment>
<comment type="caution">
    <text evidence="3">Bioinformatics prediction programs detect only 9 instead of 10 transmembrane regions.</text>
</comment>